<organism>
    <name type="scientific">Cochliobolus heterostrophus (strain C5 / ATCC 48332 / race O)</name>
    <name type="common">Southern corn leaf blight fungus</name>
    <name type="synonym">Bipolaris maydis</name>
    <dbReference type="NCBI Taxonomy" id="701091"/>
    <lineage>
        <taxon>Eukaryota</taxon>
        <taxon>Fungi</taxon>
        <taxon>Dikarya</taxon>
        <taxon>Ascomycota</taxon>
        <taxon>Pezizomycotina</taxon>
        <taxon>Dothideomycetes</taxon>
        <taxon>Pleosporomycetidae</taxon>
        <taxon>Pleosporales</taxon>
        <taxon>Pleosporineae</taxon>
        <taxon>Pleosporaceae</taxon>
        <taxon>Bipolaris</taxon>
    </lineage>
</organism>
<sequence>MSNIVVSNETKSQSVRTTKDGRQIRYNLQVIQQPERARACGSGAKSSADRRPVDPPPIVELRVFENDQEITFAYNANFFLHASLENARTIAPGRAPSTAGPSFPVLTGTPVAGMAYLDRPTPAGYFIFPDLSVRHEGKYRLSFALFENLAEVKDLDPEDPDVIYDGNHFVTHRCEVKSAPFTVFSAKKFPGLSESTALSRMVAEQGCRVRIRRDVRMRRRENKSSKEWDEYDEEGGGYDRARGTATPDNYGQAPNAPLGDRPRSLSSASNPALAPPRRPSIEEMGHGYSASNGYQQQMPPPQTPAYAQMPSYGSNQPQYSQQYQTPQPAPMMQPPQPPQHSTPYSQHSQHSSYSSQHQAQPPVPMNQQYGYSNYQQQPQQPQSQSQPQYDHAAPPRQEQMSSDYAHPSDYRRSSITQSPAQQYTASSHPVQPYHPMDQYGRSQQMSQPLHSSPQSYASSAPSHQSLPSLRPIVADKLEPVSPSYQSPPTSMSAAISVNSDGSNQHYALPKFNPQTQGLPPMSATSNKRSFSSTFDSRHLNERMVAGSRPQPSGAGYSYDPGSPDMEEPMDRAAMSYRRADGTQRQRHVPEVGS</sequence>
<evidence type="ECO:0000250" key="1">
    <source>
        <dbReference type="UniProtKB" id="C8VTV4"/>
    </source>
</evidence>
<evidence type="ECO:0000255" key="2">
    <source>
        <dbReference type="PROSITE-ProRule" id="PRU01165"/>
    </source>
</evidence>
<evidence type="ECO:0000256" key="3">
    <source>
        <dbReference type="SAM" id="MobiDB-lite"/>
    </source>
</evidence>
<evidence type="ECO:0000269" key="4">
    <source>
    </source>
</evidence>
<evidence type="ECO:0000303" key="5">
    <source>
    </source>
</evidence>
<evidence type="ECO:0000305" key="6"/>
<evidence type="ECO:0000312" key="7">
    <source>
        <dbReference type="Proteomes" id="UP000016936"/>
    </source>
</evidence>
<proteinExistence type="inferred from homology"/>
<reference key="1">
    <citation type="journal article" date="2012" name="PLoS Pathog.">
        <title>ChLae1 and ChVel1 regulate T-toxin production, virulence, oxidative stress response, and development of the maize pathogen Cochliobolus heterostrophus.</title>
        <authorList>
            <person name="Wu D."/>
            <person name="Oide S."/>
            <person name="Zhang N."/>
            <person name="Choi M.Y."/>
            <person name="Turgeon B.G."/>
        </authorList>
    </citation>
    <scope>NUCLEOTIDE SEQUENCE [GENOMIC DNA]</scope>
    <scope>FUNCTION</scope>
    <scope>DISRUPTION PHENOTYPE</scope>
    <source>
        <strain>C5 / ATCC 48332 / race O</strain>
        <tissue>Mycelium</tissue>
    </source>
</reference>
<reference key="2">
    <citation type="journal article" date="2012" name="PLoS Pathog.">
        <title>Diverse lifestyles and strategies of plant pathogenesis encoded in the genomes of eighteen Dothideomycetes fungi.</title>
        <authorList>
            <person name="Ohm R.A."/>
            <person name="Feau N."/>
            <person name="Henrissat B."/>
            <person name="Schoch C.L."/>
            <person name="Horwitz B.A."/>
            <person name="Barry K.W."/>
            <person name="Condon B.J."/>
            <person name="Copeland A.C."/>
            <person name="Dhillon B."/>
            <person name="Glaser F."/>
            <person name="Hesse C.N."/>
            <person name="Kosti I."/>
            <person name="LaButti K."/>
            <person name="Lindquist E.A."/>
            <person name="Lucas S."/>
            <person name="Salamov A.A."/>
            <person name="Bradshaw R.E."/>
            <person name="Ciuffetti L."/>
            <person name="Hamelin R.C."/>
            <person name="Kema G.H.J."/>
            <person name="Lawrence C."/>
            <person name="Scott J.A."/>
            <person name="Spatafora J.W."/>
            <person name="Turgeon B.G."/>
            <person name="de Wit P.J.G.M."/>
            <person name="Zhong S."/>
            <person name="Goodwin S.B."/>
            <person name="Grigoriev I.V."/>
        </authorList>
    </citation>
    <scope>NUCLEOTIDE SEQUENCE [LARGE SCALE GENOMIC DNA]</scope>
    <source>
        <strain>C5 / ATCC 48332 / race O</strain>
    </source>
</reference>
<reference evidence="7" key="3">
    <citation type="journal article" date="2013" name="PLoS Genet.">
        <title>Comparative genome structure, secondary metabolite, and effector coding capacity across Cochliobolus pathogens.</title>
        <authorList>
            <person name="Condon B.J."/>
            <person name="Leng Y."/>
            <person name="Wu D."/>
            <person name="Bushley K.E."/>
            <person name="Ohm R.A."/>
            <person name="Otillar R."/>
            <person name="Martin J."/>
            <person name="Schackwitz W."/>
            <person name="Grimwood J."/>
            <person name="MohdZainudin N."/>
            <person name="Xue C."/>
            <person name="Wang R."/>
            <person name="Manning V.A."/>
            <person name="Dhillon B."/>
            <person name="Tu Z.J."/>
            <person name="Steffenson B.J."/>
            <person name="Salamov A."/>
            <person name="Sun H."/>
            <person name="Lowry S."/>
            <person name="LaButti K."/>
            <person name="Han J."/>
            <person name="Copeland A."/>
            <person name="Lindquist E."/>
            <person name="Barry K."/>
            <person name="Schmutz J."/>
            <person name="Baker S.E."/>
            <person name="Ciuffetti L.M."/>
            <person name="Grigoriev I.V."/>
            <person name="Zhong S."/>
            <person name="Turgeon B.G."/>
        </authorList>
    </citation>
    <scope>NUCLEOTIDE SEQUENCE [LARGE SCALE GENOMIC DNA]</scope>
    <source>
        <strain evidence="7">C5 / ATCC 48332 / race O</strain>
    </source>
</reference>
<comment type="function">
    <text evidence="1 4">Component of the velvet transcription factor complex that controls sexual/asexual developmental ratio in response to light, promoting sexual development in the darkness while stimulating asexual sporulation under illumination (By similarity). The velvet complex acts as a global regulator for secondary metabolite gene expression (By similarity). Controls the expression of the T-toxin gene cluster (PubMed:22383877). Promotes oxidative stress tolerance and acts as a virulence factors during infection (PubMed:22383877). Negatively regulate mycelial pigmentation and controls sexual development, as well as asexual development during vegetative growth (PubMed:22383877).</text>
</comment>
<comment type="subunit">
    <text evidence="1">Component of the heterotrimeric velvet complex composed of LAE1, VEL1 and VEL2; VEL1 acting as a bridging protein between LAE1 and VEL2 (By similarity).</text>
</comment>
<comment type="subcellular location">
    <subcellularLocation>
        <location evidence="1">Nucleus</location>
    </subcellularLocation>
    <subcellularLocation>
        <location evidence="1">Cytoplasm</location>
    </subcellularLocation>
    <text evidence="1">Enriched in the nucleus in the dark (By similarity).</text>
</comment>
<comment type="domain">
    <text evidence="1">The C-terminal PEST domain is a region rich in proline, glutamic acid, serine and threonine residues that is required for the light-dependent regulation of development and secondary metabolism (By similarity).</text>
</comment>
<comment type="disruption phenotype">
    <text evidence="4">Leads to hypersensitivity to oxidative stress, compromised reproductive development, repression of asexual sporulation, and reduction of virulence during maize infection (PubMed:22383877).</text>
</comment>
<comment type="similarity">
    <text evidence="6">Belongs to the velvet family. VeA subfamily.</text>
</comment>
<protein>
    <recommendedName>
        <fullName evidence="6">Developmental and secondary metabolism regulator VEL1</fullName>
    </recommendedName>
    <alternativeName>
        <fullName evidence="6">Velvet complex subunit 1</fullName>
    </alternativeName>
</protein>
<dbReference type="EMBL" id="JF826791">
    <property type="protein sequence ID" value="AEP40317.1"/>
    <property type="molecule type" value="Genomic_DNA"/>
</dbReference>
<dbReference type="EMBL" id="KB445582">
    <property type="protein sequence ID" value="EMD87380.1"/>
    <property type="molecule type" value="Genomic_DNA"/>
</dbReference>
<dbReference type="RefSeq" id="XP_014080488.1">
    <property type="nucleotide sequence ID" value="XM_014225013.1"/>
</dbReference>
<dbReference type="SMR" id="M2SQ20"/>
<dbReference type="STRING" id="701091.M2SQ20"/>
<dbReference type="eggNOG" id="ENOG502S0HV">
    <property type="taxonomic scope" value="Eukaryota"/>
</dbReference>
<dbReference type="HOGENOM" id="CLU_022491_2_0_1"/>
<dbReference type="OMA" id="NHFVTHR"/>
<dbReference type="OrthoDB" id="27703at28556"/>
<dbReference type="PHI-base" id="PHI:2316"/>
<dbReference type="Proteomes" id="UP000016936">
    <property type="component" value="Unassembled WGS sequence"/>
</dbReference>
<dbReference type="GO" id="GO:0005737">
    <property type="term" value="C:cytoplasm"/>
    <property type="evidence" value="ECO:0007669"/>
    <property type="project" value="UniProtKB-SubCell"/>
</dbReference>
<dbReference type="GO" id="GO:0005634">
    <property type="term" value="C:nucleus"/>
    <property type="evidence" value="ECO:0007669"/>
    <property type="project" value="UniProtKB-SubCell"/>
</dbReference>
<dbReference type="GO" id="GO:0030435">
    <property type="term" value="P:sporulation resulting in formation of a cellular spore"/>
    <property type="evidence" value="ECO:0007669"/>
    <property type="project" value="UniProtKB-KW"/>
</dbReference>
<dbReference type="FunFam" id="2.60.40.3960:FF:000001">
    <property type="entry name" value="Sexual development activator VeA"/>
    <property type="match status" value="1"/>
</dbReference>
<dbReference type="Gene3D" id="2.60.40.3960">
    <property type="entry name" value="Velvet domain"/>
    <property type="match status" value="1"/>
</dbReference>
<dbReference type="InterPro" id="IPR021740">
    <property type="entry name" value="Velvet"/>
</dbReference>
<dbReference type="InterPro" id="IPR037525">
    <property type="entry name" value="Velvet_dom"/>
</dbReference>
<dbReference type="InterPro" id="IPR038491">
    <property type="entry name" value="Velvet_dom_sf"/>
</dbReference>
<dbReference type="PANTHER" id="PTHR33572:SF14">
    <property type="entry name" value="DEVELOPMENTAL AND SECONDARY METABOLISM REGULATOR VEA"/>
    <property type="match status" value="1"/>
</dbReference>
<dbReference type="PANTHER" id="PTHR33572">
    <property type="entry name" value="SPORE DEVELOPMENT REGULATOR VOSA"/>
    <property type="match status" value="1"/>
</dbReference>
<dbReference type="Pfam" id="PF11754">
    <property type="entry name" value="Velvet"/>
    <property type="match status" value="2"/>
</dbReference>
<dbReference type="PROSITE" id="PS51821">
    <property type="entry name" value="VELVET"/>
    <property type="match status" value="1"/>
</dbReference>
<keyword id="KW-0963">Cytoplasm</keyword>
<keyword id="KW-0539">Nucleus</keyword>
<keyword id="KW-1185">Reference proteome</keyword>
<keyword id="KW-0749">Sporulation</keyword>
<keyword id="KW-0804">Transcription</keyword>
<keyword id="KW-0805">Transcription regulation</keyword>
<gene>
    <name evidence="5" type="primary">VEL1</name>
    <name type="ORF">COCHEDRAFT_1113718</name>
</gene>
<name>VEA_COCH5</name>
<feature type="chain" id="PRO_0000435776" description="Developmental and secondary metabolism regulator VEL1">
    <location>
        <begin position="1"/>
        <end position="593"/>
    </location>
</feature>
<feature type="domain" description="Velvet" evidence="2">
    <location>
        <begin position="21"/>
        <end position="212"/>
    </location>
</feature>
<feature type="region of interest" description="Disordered" evidence="3">
    <location>
        <begin position="1"/>
        <end position="21"/>
    </location>
</feature>
<feature type="region of interest" description="Disordered" evidence="3">
    <location>
        <begin position="218"/>
        <end position="569"/>
    </location>
</feature>
<feature type="region of interest" description="PEST" evidence="1">
    <location>
        <begin position="443"/>
        <end position="487"/>
    </location>
</feature>
<feature type="short sequence motif" description="Nuclear localization signal" evidence="1">
    <location>
        <begin position="35"/>
        <end position="40"/>
    </location>
</feature>
<feature type="compositionally biased region" description="Polar residues" evidence="3">
    <location>
        <begin position="1"/>
        <end position="16"/>
    </location>
</feature>
<feature type="compositionally biased region" description="Low complexity" evidence="3">
    <location>
        <begin position="310"/>
        <end position="326"/>
    </location>
</feature>
<feature type="compositionally biased region" description="Pro residues" evidence="3">
    <location>
        <begin position="327"/>
        <end position="340"/>
    </location>
</feature>
<feature type="compositionally biased region" description="Low complexity" evidence="3">
    <location>
        <begin position="341"/>
        <end position="360"/>
    </location>
</feature>
<feature type="compositionally biased region" description="Low complexity" evidence="3">
    <location>
        <begin position="367"/>
        <end position="389"/>
    </location>
</feature>
<feature type="compositionally biased region" description="Polar residues" evidence="3">
    <location>
        <begin position="413"/>
        <end position="429"/>
    </location>
</feature>
<feature type="compositionally biased region" description="Polar residues" evidence="3">
    <location>
        <begin position="440"/>
        <end position="449"/>
    </location>
</feature>
<feature type="compositionally biased region" description="Low complexity" evidence="3">
    <location>
        <begin position="450"/>
        <end position="465"/>
    </location>
</feature>
<feature type="compositionally biased region" description="Polar residues" evidence="3">
    <location>
        <begin position="482"/>
        <end position="505"/>
    </location>
</feature>
<feature type="compositionally biased region" description="Polar residues" evidence="3">
    <location>
        <begin position="512"/>
        <end position="534"/>
    </location>
</feature>
<accession>M2SQ20</accession>
<accession>G4XKY8</accession>